<comment type="function">
    <text evidence="2">Mitochondrial S-adenosyl-L-methionine-dependent methyltransferase that catalyzes the formation of 5-methyl-uridine in tRNAs and 12S rRNA. Catalyzes the methylation of uridine at position 54 (m5U54) in all tRNAs. Specifically methylates the uridine in position 429 of 12S rRNA (m5U429). Does not affect RNA stability or mitochondrial translation.</text>
</comment>
<comment type="catalytic activity">
    <reaction evidence="2">
        <text>uridine(54) in tRNA + S-adenosyl-L-methionine = 5-methyluridine(54) in tRNA + S-adenosyl-L-homocysteine + H(+)</text>
        <dbReference type="Rhea" id="RHEA:42712"/>
        <dbReference type="Rhea" id="RHEA-COMP:10167"/>
        <dbReference type="Rhea" id="RHEA-COMP:10193"/>
        <dbReference type="ChEBI" id="CHEBI:15378"/>
        <dbReference type="ChEBI" id="CHEBI:57856"/>
        <dbReference type="ChEBI" id="CHEBI:59789"/>
        <dbReference type="ChEBI" id="CHEBI:65315"/>
        <dbReference type="ChEBI" id="CHEBI:74447"/>
        <dbReference type="EC" id="2.1.1.35"/>
    </reaction>
    <physiologicalReaction direction="left-to-right" evidence="2">
        <dbReference type="Rhea" id="RHEA:42713"/>
    </physiologicalReaction>
</comment>
<comment type="catalytic activity">
    <reaction evidence="2">
        <text>a uridine in 12S rRNA + S-adenosyl-L-methionine = a 5-methyluridine in 12S rRNA + S-adenosyl-L-homocysteine + H(+)</text>
        <dbReference type="Rhea" id="RHEA:69859"/>
        <dbReference type="Rhea" id="RHEA-COMP:17791"/>
        <dbReference type="Rhea" id="RHEA-COMP:17792"/>
        <dbReference type="ChEBI" id="CHEBI:15378"/>
        <dbReference type="ChEBI" id="CHEBI:57856"/>
        <dbReference type="ChEBI" id="CHEBI:59789"/>
        <dbReference type="ChEBI" id="CHEBI:65315"/>
        <dbReference type="ChEBI" id="CHEBI:74447"/>
    </reaction>
    <physiologicalReaction direction="left-to-right" evidence="2">
        <dbReference type="Rhea" id="RHEA:69860"/>
    </physiologicalReaction>
</comment>
<comment type="subcellular location">
    <subcellularLocation>
        <location evidence="2">Mitochondrion matrix</location>
    </subcellularLocation>
</comment>
<comment type="similarity">
    <text evidence="4">Belongs to the class I-like SAM-binding methyltransferase superfamily. RNA M5U methyltransferase family.</text>
</comment>
<protein>
    <recommendedName>
        <fullName>tRNA (uracil-5-)-methyltransferase homolog B</fullName>
        <ecNumber evidence="2">2.1.1.35</ecNumber>
    </recommendedName>
    <alternativeName>
        <fullName evidence="5">TRM2 homolog B</fullName>
    </alternativeName>
    <alternativeName>
        <fullName evidence="5">rRNA (uracil-5-)-methyltransferase TRMT2B</fullName>
        <ecNumber evidence="2">2.1.1.-</ecNumber>
    </alternativeName>
</protein>
<proteinExistence type="evidence at transcript level"/>
<organism>
    <name type="scientific">Pongo abelii</name>
    <name type="common">Sumatran orangutan</name>
    <name type="synonym">Pongo pygmaeus abelii</name>
    <dbReference type="NCBI Taxonomy" id="9601"/>
    <lineage>
        <taxon>Eukaryota</taxon>
        <taxon>Metazoa</taxon>
        <taxon>Chordata</taxon>
        <taxon>Craniata</taxon>
        <taxon>Vertebrata</taxon>
        <taxon>Euteleostomi</taxon>
        <taxon>Mammalia</taxon>
        <taxon>Eutheria</taxon>
        <taxon>Euarchontoglires</taxon>
        <taxon>Primates</taxon>
        <taxon>Haplorrhini</taxon>
        <taxon>Catarrhini</taxon>
        <taxon>Hominidae</taxon>
        <taxon>Pongo</taxon>
    </lineage>
</organism>
<keyword id="KW-0489">Methyltransferase</keyword>
<keyword id="KW-0496">Mitochondrion</keyword>
<keyword id="KW-1185">Reference proteome</keyword>
<keyword id="KW-0698">rRNA processing</keyword>
<keyword id="KW-0949">S-adenosyl-L-methionine</keyword>
<keyword id="KW-0808">Transferase</keyword>
<keyword id="KW-0809">Transit peptide</keyword>
<keyword id="KW-0819">tRNA processing</keyword>
<accession>Q5RFM7</accession>
<reference key="1">
    <citation type="submission" date="2004-11" db="EMBL/GenBank/DDBJ databases">
        <authorList>
            <consortium name="The German cDNA consortium"/>
        </authorList>
    </citation>
    <scope>NUCLEOTIDE SEQUENCE [LARGE SCALE MRNA]</scope>
    <source>
        <tissue>Kidney</tissue>
    </source>
</reference>
<name>TRM2B_PONAB</name>
<gene>
    <name type="primary">TRMT2B</name>
</gene>
<feature type="transit peptide" description="Mitochondrion" evidence="3">
    <location>
        <begin position="1"/>
        <end status="unknown"/>
    </location>
</feature>
<feature type="chain" id="PRO_0000311934" description="tRNA (uracil-5-)-methyltransferase homolog B">
    <location>
        <begin status="unknown"/>
        <end position="486"/>
    </location>
</feature>
<feature type="active site" description="Nucleophile" evidence="4">
    <location>
        <position position="433"/>
    </location>
</feature>
<feature type="active site" description="Proton acceptor" evidence="1">
    <location>
        <position position="479"/>
    </location>
</feature>
<feature type="binding site" evidence="4">
    <location>
        <position position="305"/>
    </location>
    <ligand>
        <name>S-adenosyl-L-methionine</name>
        <dbReference type="ChEBI" id="CHEBI:59789"/>
    </ligand>
</feature>
<feature type="binding site" evidence="4">
    <location>
        <position position="355"/>
    </location>
    <ligand>
        <name>S-adenosyl-L-methionine</name>
        <dbReference type="ChEBI" id="CHEBI:59789"/>
    </ligand>
</feature>
<feature type="binding site" evidence="4">
    <location>
        <position position="405"/>
    </location>
    <ligand>
        <name>S-adenosyl-L-methionine</name>
        <dbReference type="ChEBI" id="CHEBI:59789"/>
    </ligand>
</feature>
<sequence length="486" mass="54550">MAGLFFKPGLLPWYARNPPGWSQLFLGTVCKGDFTRVIATKCQKGQKSQKKPSHLGPLDGSWQERLADVVTPLWRLSYEEQLKVKFAAQKKILQRLESYIQMLNGVSVTTAVPKSERLSCLLHPIIPSPVINGYRNKSTFSVNRGPDGNPKTVGFYLGTWRDGNMVCVQSNHLKNIPEKHSQVAQYYEVFLRQSPLEPCLVFHEGGYWRELTVRTNSQGHTMAIITFHPQNLSQEEFHVQKEIVKEFFIRGPGAACDLTSLYFQESTMTRCSHQQSPYQLLFGEPYIFEELLSLKIRISPDAFFQINTAGAEMLYRTVGELTGVNSDTILLDICCGTGVIGLSLSQHTSRVLGIELVEQAVEDARWTAAFNGITNSEFHTGRAEKILPGLLKSKEDGQSIVAVVNPARAGLHYKVIQAIRNFRAIHTLVFVSCKLHGESTRNVIELCCPPDPAKKLLGEPFVLQQVVPVDLFPHTPHCELVLLFTR</sequence>
<evidence type="ECO:0000250" key="1">
    <source>
        <dbReference type="UniProtKB" id="P23003"/>
    </source>
</evidence>
<evidence type="ECO:0000250" key="2">
    <source>
        <dbReference type="UniProtKB" id="Q96GJ1"/>
    </source>
</evidence>
<evidence type="ECO:0000255" key="3"/>
<evidence type="ECO:0000255" key="4">
    <source>
        <dbReference type="PROSITE-ProRule" id="PRU01024"/>
    </source>
</evidence>
<evidence type="ECO:0000305" key="5"/>
<dbReference type="EC" id="2.1.1.35" evidence="2"/>
<dbReference type="EC" id="2.1.1.-" evidence="2"/>
<dbReference type="EMBL" id="CR857127">
    <property type="protein sequence ID" value="CAH89430.1"/>
    <property type="molecule type" value="mRNA"/>
</dbReference>
<dbReference type="RefSeq" id="NP_001124606.1">
    <property type="nucleotide sequence ID" value="NM_001131134.1"/>
</dbReference>
<dbReference type="SMR" id="Q5RFM7"/>
<dbReference type="STRING" id="9601.ENSPPYP00000023000"/>
<dbReference type="GeneID" id="100171443"/>
<dbReference type="KEGG" id="pon:100171443"/>
<dbReference type="CTD" id="79979"/>
<dbReference type="eggNOG" id="KOG2187">
    <property type="taxonomic scope" value="Eukaryota"/>
</dbReference>
<dbReference type="InParanoid" id="Q5RFM7"/>
<dbReference type="OrthoDB" id="10250660at2759"/>
<dbReference type="Proteomes" id="UP000001595">
    <property type="component" value="Unplaced"/>
</dbReference>
<dbReference type="GO" id="GO:0005759">
    <property type="term" value="C:mitochondrial matrix"/>
    <property type="evidence" value="ECO:0000250"/>
    <property type="project" value="UniProtKB"/>
</dbReference>
<dbReference type="GO" id="GO:0005739">
    <property type="term" value="C:mitochondrion"/>
    <property type="evidence" value="ECO:0000250"/>
    <property type="project" value="UniProtKB"/>
</dbReference>
<dbReference type="GO" id="GO:0003723">
    <property type="term" value="F:RNA binding"/>
    <property type="evidence" value="ECO:0007669"/>
    <property type="project" value="TreeGrafter"/>
</dbReference>
<dbReference type="GO" id="GO:0070041">
    <property type="term" value="F:rRNA (uridine-C5-)-methyltransferase activity"/>
    <property type="evidence" value="ECO:0000250"/>
    <property type="project" value="UniProtKB"/>
</dbReference>
<dbReference type="GO" id="GO:0030697">
    <property type="term" value="F:tRNA (uracil(54)-C5)-methyltransferase activity, S-adenosyl methionine-dependent"/>
    <property type="evidence" value="ECO:0000250"/>
    <property type="project" value="UniProtKB"/>
</dbReference>
<dbReference type="GO" id="GO:0008033">
    <property type="term" value="P:tRNA processing"/>
    <property type="evidence" value="ECO:0007669"/>
    <property type="project" value="UniProtKB-KW"/>
</dbReference>
<dbReference type="CDD" id="cd02440">
    <property type="entry name" value="AdoMet_MTases"/>
    <property type="match status" value="1"/>
</dbReference>
<dbReference type="Gene3D" id="2.40.50.1070">
    <property type="match status" value="1"/>
</dbReference>
<dbReference type="Gene3D" id="3.40.50.150">
    <property type="entry name" value="Vaccinia Virus protein VP39"/>
    <property type="match status" value="1"/>
</dbReference>
<dbReference type="InterPro" id="IPR029063">
    <property type="entry name" value="SAM-dependent_MTases_sf"/>
</dbReference>
<dbReference type="InterPro" id="IPR045850">
    <property type="entry name" value="TRM2_met"/>
</dbReference>
<dbReference type="InterPro" id="IPR025823">
    <property type="entry name" value="TRM2B_chor"/>
</dbReference>
<dbReference type="InterPro" id="IPR010280">
    <property type="entry name" value="U5_MeTrfase_fam"/>
</dbReference>
<dbReference type="PANTHER" id="PTHR45904">
    <property type="entry name" value="TRNA (URACIL-5-)-METHYLTRANSFERASE"/>
    <property type="match status" value="1"/>
</dbReference>
<dbReference type="PANTHER" id="PTHR45904:SF1">
    <property type="entry name" value="TRNA (URACIL-5-)-METHYLTRANSFERASE HOMOLOG B"/>
    <property type="match status" value="1"/>
</dbReference>
<dbReference type="Pfam" id="PF05958">
    <property type="entry name" value="tRNA_U5-meth_tr"/>
    <property type="match status" value="1"/>
</dbReference>
<dbReference type="SUPFAM" id="SSF53335">
    <property type="entry name" value="S-adenosyl-L-methionine-dependent methyltransferases"/>
    <property type="match status" value="1"/>
</dbReference>
<dbReference type="PROSITE" id="PS51687">
    <property type="entry name" value="SAM_MT_RNA_M5U"/>
    <property type="match status" value="1"/>
</dbReference>
<dbReference type="PROSITE" id="PS51621">
    <property type="entry name" value="SAM_MT_RNA_M5U_1"/>
    <property type="match status" value="1"/>
</dbReference>